<gene>
    <name type="ORF">UVI_02036160</name>
</gene>
<keyword id="KW-0511">Multifunctional enzyme</keyword>
<keyword id="KW-0596">Phosphopantetheine</keyword>
<keyword id="KW-0597">Phosphoprotein</keyword>
<keyword id="KW-0808">Transferase</keyword>
<feature type="chain" id="PRO_0000448919" description="Non-reducing polyketide synthase ustP">
    <location>
        <begin position="1"/>
        <end position="2094"/>
    </location>
</feature>
<feature type="domain" description="Ketosynthase family 3 (KS3)" evidence="5">
    <location>
        <begin position="379"/>
        <end position="813"/>
    </location>
</feature>
<feature type="domain" description="PKS/mFAS DH" evidence="6">
    <location>
        <begin position="1308"/>
        <end position="1625"/>
    </location>
</feature>
<feature type="domain" description="Carrier" evidence="4">
    <location>
        <begin position="1689"/>
        <end position="1763"/>
    </location>
</feature>
<feature type="region of interest" description="N-terminal acylcarrier protein transacylase (SAT) domain" evidence="3">
    <location>
        <begin position="9"/>
        <end position="243"/>
    </location>
</feature>
<feature type="region of interest" description="Disordered" evidence="8">
    <location>
        <begin position="357"/>
        <end position="377"/>
    </location>
</feature>
<feature type="region of interest" description="Malonyl-CoA:ACP transacylase (MAT) domain" evidence="3">
    <location>
        <begin position="914"/>
        <end position="1227"/>
    </location>
</feature>
<feature type="region of interest" description="Product template (PT) domain" evidence="3">
    <location>
        <begin position="1305"/>
        <end position="1629"/>
    </location>
</feature>
<feature type="region of interest" description="N-terminal hotdog fold" evidence="6">
    <location>
        <begin position="1308"/>
        <end position="1445"/>
    </location>
</feature>
<feature type="region of interest" description="C-terminal hotdog fold" evidence="6">
    <location>
        <begin position="1473"/>
        <end position="1625"/>
    </location>
</feature>
<feature type="region of interest" description="Disordered" evidence="8">
    <location>
        <begin position="1644"/>
        <end position="1689"/>
    </location>
</feature>
<feature type="region of interest" description="Disordered" evidence="8">
    <location>
        <begin position="1762"/>
        <end position="1782"/>
    </location>
</feature>
<feature type="region of interest" description="Claisen cyclase domain" evidence="1">
    <location>
        <begin position="1844"/>
        <end position="2069"/>
    </location>
</feature>
<feature type="compositionally biased region" description="Low complexity" evidence="8">
    <location>
        <begin position="1644"/>
        <end position="1671"/>
    </location>
</feature>
<feature type="compositionally biased region" description="Polar residues" evidence="8">
    <location>
        <begin position="1762"/>
        <end position="1778"/>
    </location>
</feature>
<feature type="active site" description="For beta-ketoacyl synthase activity" evidence="5">
    <location>
        <position position="551"/>
    </location>
</feature>
<feature type="active site" description="For beta-ketoacyl synthase activity" evidence="5">
    <location>
        <position position="686"/>
    </location>
</feature>
<feature type="active site" description="For beta-ketoacyl synthase activity" evidence="5">
    <location>
        <position position="727"/>
    </location>
</feature>
<feature type="active site" description="For acyl/malonyl transferase activity" evidence="7">
    <location>
        <position position="1004"/>
    </location>
</feature>
<feature type="active site" description="Proton acceptor; for dehydratase activity" evidence="6">
    <location>
        <position position="1341"/>
    </location>
</feature>
<feature type="active site" description="Proton donor; for dehydratase activity" evidence="6">
    <location>
        <position position="1536"/>
    </location>
</feature>
<feature type="active site" description="For Claisen cyclase activity" evidence="1">
    <location>
        <position position="1916"/>
    </location>
</feature>
<feature type="modified residue" description="O-(pantetheine 4'-phosphoryl)serine" evidence="4">
    <location>
        <position position="1723"/>
    </location>
</feature>
<name>USTP_USTVR</name>
<reference key="1">
    <citation type="journal article" date="2016" name="Genome Announc.">
        <title>Genome sequence of Ustilaginoidea virens IPU010, a rice pathogenic fungus causing false smut.</title>
        <authorList>
            <person name="Kumagai T."/>
            <person name="Ishii T."/>
            <person name="Terai G."/>
            <person name="Umemura M."/>
            <person name="Machida M."/>
            <person name="Asai K."/>
        </authorList>
    </citation>
    <scope>NUCLEOTIDE SEQUENCE [LARGE SCALE GENOMIC DNA]</scope>
    <source>
        <strain>IPU010</strain>
    </source>
</reference>
<reference key="2">
    <citation type="journal article" date="2019" name="Angew. Chem. Int. Ed.">
        <title>Enantioselective phenol coupling by laccases in the biosynthesis of fungal dimeric naphthopyrones.</title>
        <authorList>
            <person name="Obermaier S."/>
            <person name="Thiele W."/>
            <person name="Fuertges L."/>
            <person name="Mueller M."/>
        </authorList>
    </citation>
    <scope>FUNCTION</scope>
    <scope>CATALYTIC ACTIVITY</scope>
    <scope>PATHWAY</scope>
</reference>
<evidence type="ECO:0000250" key="1">
    <source>
        <dbReference type="UniProtKB" id="Q03149"/>
    </source>
</evidence>
<evidence type="ECO:0000250" key="2">
    <source>
        <dbReference type="UniProtKB" id="Q5B0D0"/>
    </source>
</evidence>
<evidence type="ECO:0000255" key="3"/>
<evidence type="ECO:0000255" key="4">
    <source>
        <dbReference type="PROSITE-ProRule" id="PRU00258"/>
    </source>
</evidence>
<evidence type="ECO:0000255" key="5">
    <source>
        <dbReference type="PROSITE-ProRule" id="PRU01348"/>
    </source>
</evidence>
<evidence type="ECO:0000255" key="6">
    <source>
        <dbReference type="PROSITE-ProRule" id="PRU01363"/>
    </source>
</evidence>
<evidence type="ECO:0000255" key="7">
    <source>
        <dbReference type="PROSITE-ProRule" id="PRU10022"/>
    </source>
</evidence>
<evidence type="ECO:0000256" key="8">
    <source>
        <dbReference type="SAM" id="MobiDB-lite"/>
    </source>
</evidence>
<evidence type="ECO:0000269" key="9">
    <source>
    </source>
</evidence>
<evidence type="ECO:0000303" key="10">
    <source>
    </source>
</evidence>
<evidence type="ECO:0000305" key="11">
    <source>
    </source>
</evidence>
<comment type="function">
    <text evidence="9 11">Non-reducing polyketide synthase; part of the gene cluster that mediates the biosynthesis of ustilaginoidins, dimeric gamma-naphthopyrones isolated from different fungal species (PubMed:31050129). The first step in the biosynthesis of ustilaginoidins is the production of gamma-naphthopyrone precursor YWA1 by the non-reducing polyketide synthase ustP, via condensation of one acetyl-CoA starter unit with 6 malonyl-CoA units (PubMed:31050129). YWA1 is then probably substrate of the ustZ to yield norrubrofusarin via a dehydration reaction (Probable). A key enzyme in the biosynthetic pathway is the laccase ustL, which catalyzes the oxidative dimerization of norrubrofusarin to ustilaginoidin A (PubMed:31050129). It can produce the M- and P-atropisomers in varying amounts, depending on the reaction conditions (PubMed:31050129). For the biosynthesis of 3-methylustilaginoid in derivatives such as chaetochromin A, a methylated derivative of YWA1 is required (Probable). The C-methylation is considered to be catalyzed by ustM, the phosphopantetheine attachment site of which indicates that it acts on the growing polyketide chain before release of the product (Probable). For the biosynthesis of chaetochromin A, it is assumed that saturation of the D2 double bond takes place before dimerization, and is probably catalyzed by an external reductase because no candidate gene was identified within the cluster (Probable).</text>
</comment>
<comment type="catalytic activity">
    <reaction evidence="9">
        <text>6 malonyl-CoA + acetyl-CoA + 6 H(+) = naphtopyrone YWA1 + 6 CO2 + 7 CoA + H2O</text>
        <dbReference type="Rhea" id="RHEA:62652"/>
        <dbReference type="ChEBI" id="CHEBI:15377"/>
        <dbReference type="ChEBI" id="CHEBI:15378"/>
        <dbReference type="ChEBI" id="CHEBI:16526"/>
        <dbReference type="ChEBI" id="CHEBI:57287"/>
        <dbReference type="ChEBI" id="CHEBI:57288"/>
        <dbReference type="ChEBI" id="CHEBI:57384"/>
        <dbReference type="ChEBI" id="CHEBI:133763"/>
    </reaction>
    <physiologicalReaction direction="left-to-right" evidence="9">
        <dbReference type="Rhea" id="RHEA:62653"/>
    </physiologicalReaction>
</comment>
<comment type="pathway">
    <text evidence="9">Secondary metabolite biosynthesis.</text>
</comment>
<comment type="domain">
    <text evidence="2">Multidomain protein; including a starter unit:ACP transacylase (SAT) that selects the starter unit; a ketosynthase (KS) that catalyzes repeated decarboxylative condensation to elongate the polyketide backbone; a malonyl-CoA:ACP transacylase (MAT) that selects and transfers the extender unit malonyl-CoA; a product template (PT) domain that controls the immediate cyclization regioselectivity of the reactive polyketide backbone; and an acyl-carrier protein (ACP) that serves as the tether of the growing and completed polyketide via its phosphopantetheinyl arm.</text>
</comment>
<comment type="domain">
    <text evidence="1">The C-terminal region is involved in Claisen-type cyclization of the second ring of naphthopyrone.</text>
</comment>
<dbReference type="EC" id="2.3.1.-" evidence="9"/>
<dbReference type="EMBL" id="BBTG02000019">
    <property type="protein sequence ID" value="GAO19112.1"/>
    <property type="molecule type" value="Genomic_DNA"/>
</dbReference>
<dbReference type="SMR" id="A0A1B5L6A0"/>
<dbReference type="ESTHER" id="ustvr-ustp">
    <property type="family name" value="Thioesterase"/>
</dbReference>
<dbReference type="Proteomes" id="UP000054053">
    <property type="component" value="Unassembled WGS sequence"/>
</dbReference>
<dbReference type="GO" id="GO:0004315">
    <property type="term" value="F:3-oxoacyl-[acyl-carrier-protein] synthase activity"/>
    <property type="evidence" value="ECO:0007669"/>
    <property type="project" value="InterPro"/>
</dbReference>
<dbReference type="GO" id="GO:0004312">
    <property type="term" value="F:fatty acid synthase activity"/>
    <property type="evidence" value="ECO:0007669"/>
    <property type="project" value="TreeGrafter"/>
</dbReference>
<dbReference type="GO" id="GO:0031177">
    <property type="term" value="F:phosphopantetheine binding"/>
    <property type="evidence" value="ECO:0007669"/>
    <property type="project" value="InterPro"/>
</dbReference>
<dbReference type="GO" id="GO:0006633">
    <property type="term" value="P:fatty acid biosynthetic process"/>
    <property type="evidence" value="ECO:0007669"/>
    <property type="project" value="InterPro"/>
</dbReference>
<dbReference type="GO" id="GO:0044550">
    <property type="term" value="P:secondary metabolite biosynthetic process"/>
    <property type="evidence" value="ECO:0007669"/>
    <property type="project" value="TreeGrafter"/>
</dbReference>
<dbReference type="CDD" id="cd00833">
    <property type="entry name" value="PKS"/>
    <property type="match status" value="1"/>
</dbReference>
<dbReference type="Gene3D" id="3.30.70.3290">
    <property type="match status" value="1"/>
</dbReference>
<dbReference type="Gene3D" id="3.40.47.10">
    <property type="match status" value="1"/>
</dbReference>
<dbReference type="Gene3D" id="1.10.1200.10">
    <property type="entry name" value="ACP-like"/>
    <property type="match status" value="1"/>
</dbReference>
<dbReference type="Gene3D" id="3.40.50.1820">
    <property type="entry name" value="alpha/beta hydrolase"/>
    <property type="match status" value="1"/>
</dbReference>
<dbReference type="Gene3D" id="3.40.366.10">
    <property type="entry name" value="Malonyl-Coenzyme A Acyl Carrier Protein, domain 2"/>
    <property type="match status" value="2"/>
</dbReference>
<dbReference type="Gene3D" id="3.10.129.110">
    <property type="entry name" value="Polyketide synthase dehydratase"/>
    <property type="match status" value="1"/>
</dbReference>
<dbReference type="InterPro" id="IPR029058">
    <property type="entry name" value="AB_hydrolase_fold"/>
</dbReference>
<dbReference type="InterPro" id="IPR001227">
    <property type="entry name" value="Ac_transferase_dom_sf"/>
</dbReference>
<dbReference type="InterPro" id="IPR036736">
    <property type="entry name" value="ACP-like_sf"/>
</dbReference>
<dbReference type="InterPro" id="IPR014043">
    <property type="entry name" value="Acyl_transferase_dom"/>
</dbReference>
<dbReference type="InterPro" id="IPR016035">
    <property type="entry name" value="Acyl_Trfase/lysoPLipase"/>
</dbReference>
<dbReference type="InterPro" id="IPR018201">
    <property type="entry name" value="Ketoacyl_synth_AS"/>
</dbReference>
<dbReference type="InterPro" id="IPR014031">
    <property type="entry name" value="Ketoacyl_synth_C"/>
</dbReference>
<dbReference type="InterPro" id="IPR014030">
    <property type="entry name" value="Ketoacyl_synth_N"/>
</dbReference>
<dbReference type="InterPro" id="IPR016036">
    <property type="entry name" value="Malonyl_transacylase_ACP-bd"/>
</dbReference>
<dbReference type="InterPro" id="IPR020841">
    <property type="entry name" value="PKS_Beta-ketoAc_synthase_dom"/>
</dbReference>
<dbReference type="InterPro" id="IPR042104">
    <property type="entry name" value="PKS_dehydratase_sf"/>
</dbReference>
<dbReference type="InterPro" id="IPR049900">
    <property type="entry name" value="PKS_mFAS_DH"/>
</dbReference>
<dbReference type="InterPro" id="IPR050091">
    <property type="entry name" value="PKS_NRPS_Biosynth_Enz"/>
</dbReference>
<dbReference type="InterPro" id="IPR020806">
    <property type="entry name" value="PKS_PP-bd"/>
</dbReference>
<dbReference type="InterPro" id="IPR009081">
    <property type="entry name" value="PP-bd_ACP"/>
</dbReference>
<dbReference type="InterPro" id="IPR030918">
    <property type="entry name" value="PT_fungal_PKS"/>
</dbReference>
<dbReference type="InterPro" id="IPR032088">
    <property type="entry name" value="SAT"/>
</dbReference>
<dbReference type="InterPro" id="IPR001031">
    <property type="entry name" value="Thioesterase"/>
</dbReference>
<dbReference type="InterPro" id="IPR016039">
    <property type="entry name" value="Thiolase-like"/>
</dbReference>
<dbReference type="NCBIfam" id="TIGR04532">
    <property type="entry name" value="PT_fungal_PKS"/>
    <property type="match status" value="1"/>
</dbReference>
<dbReference type="PANTHER" id="PTHR43775:SF45">
    <property type="entry name" value="CONIDIAL PIGMENT POLYKETIDE SYNTHASE ALB1"/>
    <property type="match status" value="1"/>
</dbReference>
<dbReference type="PANTHER" id="PTHR43775">
    <property type="entry name" value="FATTY ACID SYNTHASE"/>
    <property type="match status" value="1"/>
</dbReference>
<dbReference type="Pfam" id="PF00698">
    <property type="entry name" value="Acyl_transf_1"/>
    <property type="match status" value="1"/>
</dbReference>
<dbReference type="Pfam" id="PF22621">
    <property type="entry name" value="CurL-like_PKS_C"/>
    <property type="match status" value="1"/>
</dbReference>
<dbReference type="Pfam" id="PF00109">
    <property type="entry name" value="ketoacyl-synt"/>
    <property type="match status" value="1"/>
</dbReference>
<dbReference type="Pfam" id="PF02801">
    <property type="entry name" value="Ketoacyl-synt_C"/>
    <property type="match status" value="1"/>
</dbReference>
<dbReference type="Pfam" id="PF00550">
    <property type="entry name" value="PP-binding"/>
    <property type="match status" value="1"/>
</dbReference>
<dbReference type="Pfam" id="PF16073">
    <property type="entry name" value="SAT"/>
    <property type="match status" value="1"/>
</dbReference>
<dbReference type="Pfam" id="PF00975">
    <property type="entry name" value="Thioesterase"/>
    <property type="match status" value="1"/>
</dbReference>
<dbReference type="SMART" id="SM00827">
    <property type="entry name" value="PKS_AT"/>
    <property type="match status" value="1"/>
</dbReference>
<dbReference type="SMART" id="SM00825">
    <property type="entry name" value="PKS_KS"/>
    <property type="match status" value="1"/>
</dbReference>
<dbReference type="SMART" id="SM00823">
    <property type="entry name" value="PKS_PP"/>
    <property type="match status" value="1"/>
</dbReference>
<dbReference type="SUPFAM" id="SSF47336">
    <property type="entry name" value="ACP-like"/>
    <property type="match status" value="1"/>
</dbReference>
<dbReference type="SUPFAM" id="SSF53474">
    <property type="entry name" value="alpha/beta-Hydrolases"/>
    <property type="match status" value="1"/>
</dbReference>
<dbReference type="SUPFAM" id="SSF52151">
    <property type="entry name" value="FabD/lysophospholipase-like"/>
    <property type="match status" value="1"/>
</dbReference>
<dbReference type="SUPFAM" id="SSF55048">
    <property type="entry name" value="Probable ACP-binding domain of malonyl-CoA ACP transacylase"/>
    <property type="match status" value="1"/>
</dbReference>
<dbReference type="SUPFAM" id="SSF53901">
    <property type="entry name" value="Thiolase-like"/>
    <property type="match status" value="1"/>
</dbReference>
<dbReference type="PROSITE" id="PS50075">
    <property type="entry name" value="CARRIER"/>
    <property type="match status" value="1"/>
</dbReference>
<dbReference type="PROSITE" id="PS00606">
    <property type="entry name" value="KS3_1"/>
    <property type="match status" value="1"/>
</dbReference>
<dbReference type="PROSITE" id="PS52004">
    <property type="entry name" value="KS3_2"/>
    <property type="match status" value="1"/>
</dbReference>
<dbReference type="PROSITE" id="PS52019">
    <property type="entry name" value="PKS_MFAS_DH"/>
    <property type="match status" value="1"/>
</dbReference>
<sequence length="2094" mass="226793">MANVFQIAVFGDLSVPYHSELRRLFSEKRDYVLATLFTKSYYAVKSEISRLPPSQRAQFPFSSNIEELLNADKESTTSNYALDSFFFCLCQISSFVSHLNRSGTSYPRASSSCLASRCIGLLAAVAISCSENVYDLVSIAPEVVALAFRVGLLVQGKTKSVTLSSGNGASCSTVIAGLDEPAASQLLNAYFDNKGAPALSRVYVSAVGSGTITLSGPPAQLKEFLSHHSDLKAGKIQVGGLFHSPSLYTDADVSGLVASATAHLRGRVARIPVILNGHEKQQELVGGETCQHLLEVVVSDILRHQMRWDLAAERVIRAIRRSGCSAVELLPFVAGSVEGLSSVLRATMGIDRVDVPNTAGVDSSSRGSGHADAEKQPARSKIAIIGFSGRYPEADDNEEFWELLAAGLDVHREIPKERFDPYLYFDPTCKKKNTSGVTKGCFVRNPDLFDSRFFSMSPREADQADPAQRFALMTAYEAMEMAGFVPDSTPSSQRSRVGVFYGTASDDYREINAAQNVDTYFVPGGSRAFLPARINYHFRFSGPSFDVDTACSSGLAAVHIACNSLWAEDCDVAIAGGTNILTNPDNWAGLDRAHFLSRTGNCNTFDDAADGYCRSDTVATVILKRLEDALLDGDPVFGTILGAYTNHSAEAVSMTRPHSGAQRAICTRILRSSNVDCSEVSYVEMHGTGTQHGDATEMDSVLSVFAPDTTSRKSPLFIGSVKANVGHAESAAGISSLVKVLLMMQKNAIPRHVGIKTKLNRNFPKDLVQRNVHISLENRSWPRPDPRVVPHGRRVFINNFGAAGGNSSVLVEDAPVRPAPERDDASWPVHAVAVSAKTQNSFKENIRALIAYLETRPDVSLGSLSYTTTARRIHYSYRTAVVGSSVDEIRNALHDVAAREKHLSTAGGGPPIGFSFTGQGSQYLGMGKKLLSLPQFESLLAGLDGIVRLQGFPSILDVVSGKAETPIEDMSPVKVQLAIACLEMALGKFWIALGVVPQIVVGHSLGEYAALNIAGVLSDADTIHLVGTRARLLEKACSMGSHSMLAVKASAAEASSLRSSSHPDLDIACINGPEDTVVAGSNSQIEAFKDLLNGRSVKSTQVKVQFAFHSAQVEPMLEAFRQACGAVVVNEPSIPVISPLLGRVMKSASDIGPVGDYLARHCRETVNFCEGVLSARNSGLIPDKMMWVEVGPHPICSNMLRSTLGSSTQTIPSLRRGEDDCKIFTPALAKLYDSGLAINWGEYHAGAQQTKQVLLLPSYRWELKSHWIPYTNDWCLTKGDAPAPQLLALPEAAAAAAAAERRLFTTSVQYITAESYGAQEASMTARTDVQHPDFREVLLAHQVNGRPVCSSAVYADMAYTMFSRMLEKSSVPFDKSDLGIEVADMAADKSLILNDDPSPQMLELKASVNWSTRQGSFSMSSISSADGKPTAKHAKCSGFFTDKSRWKSEWKRRDFLVKSRIQELRSSVHDDSGSVHMIKTGMFYKLFTALVDYRDSFKGCRELVMRSADLESTAKVRFNTPAGTADKWKLPPHWLDSLGQITGFTMNGNDEVDSKNQVYINHGWDNMKICGVLSDQTTYNTYLKMQPKDKGSYCGDVYIFNQDMDEVVAVYEGVTFAAVQRKVLDLVLPKPKAAAQSGAAAAAAAAAPSQRQQQQQQQQQQQPAQPVAASQESGMDDMPPTLVPSEKKDVPSEKLKVIIAEEVGASISDVQDDAELAPLGVDSLLALTISDRMLEELGLRVDSSAFISCITVAELVRHILGSSTPSSDSGPATPSITPLQEPDFGTSALSERIESAFASVQVESDRCSDTTQYGDEKADAVTKFEIPPATSVLLQGNPRTCTRKVWLFPDGSGSAASYMPLPDVDPAKVAIYGLSSPFIKHTATAKPCQFGEMTAAYVAEMRRRQPSGPYSVGGWSAGGLCAYDAAQRLVADGETVDALILIDSPNPIGLKELPPRLYNELSRLNVFGAEPGAKVPEWLVPHFKLFADILVTCKLRPWQAAKPLPAWALWARNGVDENQTIERWPSDPENMTWLLNRRTQAILGCNGWDELLGKKNITVGVVEGAHHFSMLKQPAVPQVSDFLRTIMESTGAGI</sequence>
<accession>A0A1B5L6A0</accession>
<organism>
    <name type="scientific">Ustilaginoidea virens</name>
    <name type="common">Rice false smut fungus</name>
    <name type="synonym">Villosiclava virens</name>
    <dbReference type="NCBI Taxonomy" id="1159556"/>
    <lineage>
        <taxon>Eukaryota</taxon>
        <taxon>Fungi</taxon>
        <taxon>Dikarya</taxon>
        <taxon>Ascomycota</taxon>
        <taxon>Pezizomycotina</taxon>
        <taxon>Sordariomycetes</taxon>
        <taxon>Hypocreomycetidae</taxon>
        <taxon>Hypocreales</taxon>
        <taxon>Clavicipitaceae</taxon>
        <taxon>Ustilaginoidea</taxon>
    </lineage>
</organism>
<protein>
    <recommendedName>
        <fullName evidence="10">Non-reducing polyketide synthase ustP</fullName>
        <shortName evidence="10">NR-PKS ustB</shortName>
        <ecNumber evidence="9">2.3.1.-</ecNumber>
    </recommendedName>
    <alternativeName>
        <fullName evidence="10">Ustilaginoidins biosynthesis cluster protein P</fullName>
    </alternativeName>
</protein>
<proteinExistence type="evidence at protein level"/>